<comment type="function">
    <text>Promotes colloidosmotic lysis by binding to the midgut epithelial cells of hymenopteran species.</text>
</comment>
<comment type="developmental stage">
    <text>The crystal protein is produced during sporulation and is accumulated both as an inclusion and as part of the spore coat.</text>
</comment>
<accession>P56957</accession>
<reference key="1">
    <citation type="patent" date="1997-01-21" number="US5596071">
        <title>Bacillus thuringiensis toxins active against hymenopteran pests.</title>
        <authorList>
            <person name="Payne J.M."/>
            <person name="Kennedy M.K."/>
            <person name="Randall J.B."/>
            <person name="Meier H."/>
            <person name="Uick H.J."/>
            <person name="Foncerrada L."/>
            <person name="Schnepf H.E."/>
            <person name="Schwab G.E."/>
            <person name="Fu J.M."/>
        </authorList>
    </citation>
    <scope>NUCLEOTIDE SEQUENCE [GENOMIC DNA]</scope>
    <source>
        <strain>NRRL B-18921 / PS211B2</strain>
    </source>
</reference>
<keyword id="KW-0749">Sporulation</keyword>
<keyword id="KW-0800">Toxin</keyword>
<keyword id="KW-0843">Virulence</keyword>
<protein>
    <recommendedName>
        <fullName>Pesticidal crystal protein Cry22Aa</fullName>
    </recommendedName>
    <alternativeName>
        <fullName>79 kDa crystal protein</fullName>
    </alternativeName>
    <alternativeName>
        <fullName>Crystaline entomocidal protoxin</fullName>
    </alternativeName>
    <alternativeName>
        <fullName>Insecticidal delta-endotoxin CryXXIIA(a)</fullName>
    </alternativeName>
</protein>
<name>C22AA_BACTU</name>
<sequence>MKEQNLNKYDEITVQAASDYIDIRPIFQTNGSATFNSNTNITTLTQAINSQAGAIAGKTALDMRHDFTFRADIFLGTKSNGADGIAIAFHRGSIGFVGTKGGGLGILGAPKGIGFELDTYANAPEDEVGDSFGHGAMKGSFPSFPNGYPHAGFVSTDKNSRWLSALAQMQRIAAPNGRWRRLEIRWDARNKELTANLQDLTFNDITVGEKPRTPRTATWRLVNPAFELDQKYTFVIGSATGASNNLHQIGIIEFDAYFTKPTIEANNVNVPVGATFNPKTYPGINLRATDEIDGDLTSKIIVKANNVNTSKTGVYYVTYYVENSYGESDEKTIEVTVFSNPTIIASDVEIEKGESFNPLTDSRVGLSAQDSLGNDITQNVKVKSSNVDTSKPGEYEVVFEVTDSFGGKAEKDFKVTVLGQPSIEANNVELEIDDSLDPLTDAKVGLRAKDSLGNDITKDIKVKFNNVDTSNSGKYEVIFEVTDRFGKKAEKSIEVLVLGEPSIEANDVEVNKGETFEPLTDSRVGLRAKDSLGNDITKDVKIKSSNVDTSKPGEYEVVFEVTDRFGKYVEKTIGVIVPVIDDEWEDGNVNGWKFYAGQDIKLLKDPDKAYKGDYVFYDSRHVAISKTIPLTDLQINTNYEITVYAKAESGDHHLKVTYKKDPAGPEEPPVFNRLISTGTLVEKDYRELKGTFRVTELNKAPLIIVENFGAGYIGGIRIVKIS</sequence>
<proteinExistence type="evidence at transcript level"/>
<feature type="chain" id="PRO_0000174098" description="Pesticidal crystal protein Cry22Aa">
    <location>
        <begin position="1"/>
        <end position="722"/>
    </location>
</feature>
<organism>
    <name type="scientific">Bacillus thuringiensis</name>
    <dbReference type="NCBI Taxonomy" id="1428"/>
    <lineage>
        <taxon>Bacteria</taxon>
        <taxon>Bacillati</taxon>
        <taxon>Bacillota</taxon>
        <taxon>Bacilli</taxon>
        <taxon>Bacillales</taxon>
        <taxon>Bacillaceae</taxon>
        <taxon>Bacillus</taxon>
        <taxon>Bacillus cereus group</taxon>
    </lineage>
</organism>
<gene>
    <name type="primary">cry22Aa</name>
    <name type="synonym">cryXXIIA(a)</name>
</gene>
<dbReference type="EMBL" id="I34547">
    <property type="status" value="NOT_ANNOTATED_CDS"/>
    <property type="molecule type" value="Unassigned_DNA"/>
</dbReference>
<dbReference type="SMR" id="P56957"/>
<dbReference type="GO" id="GO:0090729">
    <property type="term" value="F:toxin activity"/>
    <property type="evidence" value="ECO:0007669"/>
    <property type="project" value="UniProtKB-KW"/>
</dbReference>
<dbReference type="GO" id="GO:0030435">
    <property type="term" value="P:sporulation resulting in formation of a cellular spore"/>
    <property type="evidence" value="ECO:0007669"/>
    <property type="project" value="UniProtKB-KW"/>
</dbReference>
<dbReference type="CDD" id="cd01951">
    <property type="entry name" value="lectin_L-type"/>
    <property type="match status" value="1"/>
</dbReference>
<dbReference type="Gene3D" id="2.60.120.200">
    <property type="match status" value="1"/>
</dbReference>
<dbReference type="Gene3D" id="2.60.120.260">
    <property type="entry name" value="Galactose-binding domain-like"/>
    <property type="match status" value="1"/>
</dbReference>
<dbReference type="Gene3D" id="2.60.40.10">
    <property type="entry name" value="Immunoglobulins"/>
    <property type="match status" value="4"/>
</dbReference>
<dbReference type="InterPro" id="IPR013320">
    <property type="entry name" value="ConA-like_dom_sf"/>
</dbReference>
<dbReference type="InterPro" id="IPR032179">
    <property type="entry name" value="Cry22Aa_Ig-like"/>
</dbReference>
<dbReference type="InterPro" id="IPR008979">
    <property type="entry name" value="Galactose-bd-like_sf"/>
</dbReference>
<dbReference type="InterPro" id="IPR013783">
    <property type="entry name" value="Ig-like_fold"/>
</dbReference>
<dbReference type="InterPro" id="IPR056573">
    <property type="entry name" value="Lectin_L-type_dom"/>
</dbReference>
<dbReference type="Pfam" id="PF16403">
    <property type="entry name" value="Bact_surface_Ig-like"/>
    <property type="match status" value="4"/>
</dbReference>
<dbReference type="Pfam" id="PF18483">
    <property type="entry name" value="Lectin_L-type_dom"/>
    <property type="match status" value="1"/>
</dbReference>
<dbReference type="SUPFAM" id="SSF49899">
    <property type="entry name" value="Concanavalin A-like lectins/glucanases"/>
    <property type="match status" value="1"/>
</dbReference>
<dbReference type="SUPFAM" id="SSF49785">
    <property type="entry name" value="Galactose-binding domain-like"/>
    <property type="match status" value="1"/>
</dbReference>